<reference key="1">
    <citation type="journal article" date="2008" name="PLoS ONE">
        <title>Genome biology of Actinobacillus pleuropneumoniae JL03, an isolate of serotype 3 prevalent in China.</title>
        <authorList>
            <person name="Xu Z."/>
            <person name="Zhou Y."/>
            <person name="Li L."/>
            <person name="Zhou R."/>
            <person name="Xiao S."/>
            <person name="Wan Y."/>
            <person name="Zhang S."/>
            <person name="Wang K."/>
            <person name="Li W."/>
            <person name="Li L."/>
            <person name="Jin H."/>
            <person name="Kang M."/>
            <person name="Dalai B."/>
            <person name="Li T."/>
            <person name="Liu L."/>
            <person name="Cheng Y."/>
            <person name="Zhang L."/>
            <person name="Xu T."/>
            <person name="Zheng H."/>
            <person name="Pu S."/>
            <person name="Wang B."/>
            <person name="Gu W."/>
            <person name="Zhang X.L."/>
            <person name="Zhu G.-F."/>
            <person name="Wang S."/>
            <person name="Zhao G.-P."/>
            <person name="Chen H."/>
        </authorList>
    </citation>
    <scope>NUCLEOTIDE SEQUENCE [LARGE SCALE GENOMIC DNA]</scope>
    <source>
        <strain>JL03</strain>
    </source>
</reference>
<evidence type="ECO:0000255" key="1">
    <source>
        <dbReference type="HAMAP-Rule" id="MF_01150"/>
    </source>
</evidence>
<keyword id="KW-0143">Chaperone</keyword>
<keyword id="KW-0963">Cytoplasm</keyword>
<sequence>MAHSQLLSSEERLFCYRWFHSLLAKELSEPQLQALQAGQFASFFAFLAELGFQPQVTDLQNELAKLTAYDSPRLELAADFAQCFLLEGKLSALPYASYYLDERDLSENLAVMDQWLTKFQLKINRLHNEPSDHLCIYLEVLIKLIETEQPVQVQQQFIRQQLLGWLPQWAEKTAQIHSSTAFYQIISNLLLGFLQQDIT</sequence>
<comment type="function">
    <text evidence="1">Involved in the biogenesis of TorA. Acts on TorA before the insertion of the molybdenum cofactor and, as a result, probably favors a conformation of the apoenzyme that is competent for acquiring the cofactor.</text>
</comment>
<comment type="subcellular location">
    <subcellularLocation>
        <location evidence="1">Cytoplasm</location>
    </subcellularLocation>
</comment>
<comment type="similarity">
    <text evidence="1">Belongs to the TorD/DmsD family. TorD subfamily.</text>
</comment>
<accession>B0BSW9</accession>
<feature type="chain" id="PRO_0000414887" description="Chaperone protein TorD">
    <location>
        <begin position="1"/>
        <end position="199"/>
    </location>
</feature>
<gene>
    <name evidence="1" type="primary">torD</name>
    <name type="ordered locus">APJL_1833</name>
</gene>
<dbReference type="EMBL" id="CP000687">
    <property type="protein sequence ID" value="ABY70383.1"/>
    <property type="molecule type" value="Genomic_DNA"/>
</dbReference>
<dbReference type="RefSeq" id="WP_012263391.1">
    <property type="nucleotide sequence ID" value="NC_010278.1"/>
</dbReference>
<dbReference type="SMR" id="B0BSW9"/>
<dbReference type="KEGG" id="apj:APJL_1833"/>
<dbReference type="HOGENOM" id="CLU_077650_4_0_6"/>
<dbReference type="Proteomes" id="UP000008547">
    <property type="component" value="Chromosome"/>
</dbReference>
<dbReference type="GO" id="GO:0005737">
    <property type="term" value="C:cytoplasm"/>
    <property type="evidence" value="ECO:0007669"/>
    <property type="project" value="UniProtKB-SubCell"/>
</dbReference>
<dbReference type="GO" id="GO:0051259">
    <property type="term" value="P:protein complex oligomerization"/>
    <property type="evidence" value="ECO:0007669"/>
    <property type="project" value="InterPro"/>
</dbReference>
<dbReference type="GO" id="GO:0006457">
    <property type="term" value="P:protein folding"/>
    <property type="evidence" value="ECO:0007669"/>
    <property type="project" value="UniProtKB-UniRule"/>
</dbReference>
<dbReference type="Gene3D" id="1.20.120.1820">
    <property type="match status" value="1"/>
</dbReference>
<dbReference type="Gene3D" id="1.20.1280.20">
    <property type="entry name" value="HscB, C-terminal domain"/>
    <property type="match status" value="1"/>
</dbReference>
<dbReference type="HAMAP" id="MF_01150">
    <property type="entry name" value="TorD"/>
    <property type="match status" value="1"/>
</dbReference>
<dbReference type="InterPro" id="IPR023069">
    <property type="entry name" value="Chaperone_TorD"/>
</dbReference>
<dbReference type="InterPro" id="IPR020945">
    <property type="entry name" value="DMSO/NO3_reduct_chaperone"/>
</dbReference>
<dbReference type="InterPro" id="IPR036386">
    <property type="entry name" value="HscB_C_sf"/>
</dbReference>
<dbReference type="InterPro" id="IPR036411">
    <property type="entry name" value="TorD-like_sf"/>
</dbReference>
<dbReference type="InterPro" id="IPR050289">
    <property type="entry name" value="TorD/DmsD_chaperones"/>
</dbReference>
<dbReference type="NCBIfam" id="NF003442">
    <property type="entry name" value="PRK04976.1"/>
    <property type="match status" value="1"/>
</dbReference>
<dbReference type="PANTHER" id="PTHR34227:SF11">
    <property type="entry name" value="CHAPERONE PROTEIN TORD"/>
    <property type="match status" value="1"/>
</dbReference>
<dbReference type="PANTHER" id="PTHR34227">
    <property type="entry name" value="CHAPERONE PROTEIN YCDY"/>
    <property type="match status" value="1"/>
</dbReference>
<dbReference type="Pfam" id="PF02613">
    <property type="entry name" value="Nitrate_red_del"/>
    <property type="match status" value="1"/>
</dbReference>
<dbReference type="SUPFAM" id="SSF89155">
    <property type="entry name" value="TorD-like"/>
    <property type="match status" value="1"/>
</dbReference>
<proteinExistence type="inferred from homology"/>
<organism>
    <name type="scientific">Actinobacillus pleuropneumoniae serotype 3 (strain JL03)</name>
    <dbReference type="NCBI Taxonomy" id="434271"/>
    <lineage>
        <taxon>Bacteria</taxon>
        <taxon>Pseudomonadati</taxon>
        <taxon>Pseudomonadota</taxon>
        <taxon>Gammaproteobacteria</taxon>
        <taxon>Pasteurellales</taxon>
        <taxon>Pasteurellaceae</taxon>
        <taxon>Actinobacillus</taxon>
    </lineage>
</organism>
<name>TORD_ACTPJ</name>
<protein>
    <recommendedName>
        <fullName evidence="1">Chaperone protein TorD</fullName>
    </recommendedName>
</protein>